<accession>Q3A608</accession>
<organism>
    <name type="scientific">Syntrophotalea carbinolica (strain DSM 2380 / NBRC 103641 / GraBd1)</name>
    <name type="common">Pelobacter carbinolicus</name>
    <dbReference type="NCBI Taxonomy" id="338963"/>
    <lineage>
        <taxon>Bacteria</taxon>
        <taxon>Pseudomonadati</taxon>
        <taxon>Thermodesulfobacteriota</taxon>
        <taxon>Desulfuromonadia</taxon>
        <taxon>Desulfuromonadales</taxon>
        <taxon>Syntrophotaleaceae</taxon>
        <taxon>Syntrophotalea</taxon>
    </lineage>
</organism>
<sequence length="179" mass="19532">MKSTAISRRYAKALVNLAAPDGQLESTYAQLEQLQQAFACEPRLYKLLASPTLAADKIAGLLEGISNYLQLSTTLRNLLGLLQQRQRLEYFDALVADYRELADVQLGLVRARVCSAAPLDAAVQQAISAQLQKRYGKQAVLELAVEPELLGGVRIEVAGQVLDGTIRSGLRRMAGYLNS</sequence>
<evidence type="ECO:0000255" key="1">
    <source>
        <dbReference type="HAMAP-Rule" id="MF_01416"/>
    </source>
</evidence>
<comment type="function">
    <text evidence="1">F(1)F(0) ATP synthase produces ATP from ADP in the presence of a proton or sodium gradient. F-type ATPases consist of two structural domains, F(1) containing the extramembraneous catalytic core and F(0) containing the membrane proton channel, linked together by a central stalk and a peripheral stalk. During catalysis, ATP synthesis in the catalytic domain of F(1) is coupled via a rotary mechanism of the central stalk subunits to proton translocation.</text>
</comment>
<comment type="function">
    <text evidence="1">This protein is part of the stalk that links CF(0) to CF(1). It either transmits conformational changes from CF(0) to CF(1) or is implicated in proton conduction.</text>
</comment>
<comment type="subunit">
    <text evidence="1">F-type ATPases have 2 components, F(1) - the catalytic core - and F(0) - the membrane proton channel. F(1) has five subunits: alpha(3), beta(3), gamma(1), delta(1), epsilon(1). F(0) has three main subunits: a(1), b(2) and c(10-14). The alpha and beta chains form an alternating ring which encloses part of the gamma chain. F(1) is attached to F(0) by a central stalk formed by the gamma and epsilon chains, while a peripheral stalk is formed by the delta and b chains.</text>
</comment>
<comment type="subcellular location">
    <subcellularLocation>
        <location evidence="1">Cell inner membrane</location>
        <topology evidence="1">Peripheral membrane protein</topology>
    </subcellularLocation>
</comment>
<comment type="similarity">
    <text evidence="1">Belongs to the ATPase delta chain family.</text>
</comment>
<proteinExistence type="inferred from homology"/>
<protein>
    <recommendedName>
        <fullName evidence="1">ATP synthase subunit delta 1</fullName>
    </recommendedName>
    <alternativeName>
        <fullName evidence="1">ATP synthase F(1) sector subunit delta 1</fullName>
    </alternativeName>
    <alternativeName>
        <fullName evidence="1">F-type ATPase subunit delta 1</fullName>
        <shortName evidence="1">F-ATPase subunit delta 1</shortName>
    </alternativeName>
</protein>
<feature type="chain" id="PRO_0000382138" description="ATP synthase subunit delta 1">
    <location>
        <begin position="1"/>
        <end position="179"/>
    </location>
</feature>
<reference key="1">
    <citation type="submission" date="2005-10" db="EMBL/GenBank/DDBJ databases">
        <title>Complete sequence of Pelobacter carbinolicus DSM 2380.</title>
        <authorList>
            <person name="Copeland A."/>
            <person name="Lucas S."/>
            <person name="Lapidus A."/>
            <person name="Barry K."/>
            <person name="Detter J.C."/>
            <person name="Glavina T."/>
            <person name="Hammon N."/>
            <person name="Israni S."/>
            <person name="Pitluck S."/>
            <person name="Chertkov O."/>
            <person name="Schmutz J."/>
            <person name="Larimer F."/>
            <person name="Land M."/>
            <person name="Kyrpides N."/>
            <person name="Ivanova N."/>
            <person name="Richardson P."/>
        </authorList>
    </citation>
    <scope>NUCLEOTIDE SEQUENCE [LARGE SCALE GENOMIC DNA]</scope>
    <source>
        <strain>DSM 2380 / NBRC 103641 / GraBd1</strain>
    </source>
</reference>
<dbReference type="EMBL" id="CP000142">
    <property type="protein sequence ID" value="ABA88199.1"/>
    <property type="molecule type" value="Genomic_DNA"/>
</dbReference>
<dbReference type="RefSeq" id="WP_011340670.1">
    <property type="nucleotide sequence ID" value="NC_007498.2"/>
</dbReference>
<dbReference type="SMR" id="Q3A608"/>
<dbReference type="STRING" id="338963.Pcar_0946"/>
<dbReference type="KEGG" id="pca:Pcar_0946"/>
<dbReference type="eggNOG" id="COG0712">
    <property type="taxonomic scope" value="Bacteria"/>
</dbReference>
<dbReference type="HOGENOM" id="CLU_085114_4_1_7"/>
<dbReference type="OrthoDB" id="9802471at2"/>
<dbReference type="Proteomes" id="UP000002534">
    <property type="component" value="Chromosome"/>
</dbReference>
<dbReference type="GO" id="GO:0005886">
    <property type="term" value="C:plasma membrane"/>
    <property type="evidence" value="ECO:0007669"/>
    <property type="project" value="UniProtKB-SubCell"/>
</dbReference>
<dbReference type="GO" id="GO:0045259">
    <property type="term" value="C:proton-transporting ATP synthase complex"/>
    <property type="evidence" value="ECO:0007669"/>
    <property type="project" value="UniProtKB-KW"/>
</dbReference>
<dbReference type="GO" id="GO:0046933">
    <property type="term" value="F:proton-transporting ATP synthase activity, rotational mechanism"/>
    <property type="evidence" value="ECO:0007669"/>
    <property type="project" value="UniProtKB-UniRule"/>
</dbReference>
<dbReference type="Gene3D" id="1.10.520.20">
    <property type="entry name" value="N-terminal domain of the delta subunit of the F1F0-ATP synthase"/>
    <property type="match status" value="1"/>
</dbReference>
<dbReference type="HAMAP" id="MF_01416">
    <property type="entry name" value="ATP_synth_delta_bact"/>
    <property type="match status" value="1"/>
</dbReference>
<dbReference type="InterPro" id="IPR026015">
    <property type="entry name" value="ATP_synth_OSCP/delta_N_sf"/>
</dbReference>
<dbReference type="InterPro" id="IPR000711">
    <property type="entry name" value="ATPase_OSCP/dsu"/>
</dbReference>
<dbReference type="NCBIfam" id="TIGR01145">
    <property type="entry name" value="ATP_synt_delta"/>
    <property type="match status" value="1"/>
</dbReference>
<dbReference type="PANTHER" id="PTHR11910">
    <property type="entry name" value="ATP SYNTHASE DELTA CHAIN"/>
    <property type="match status" value="1"/>
</dbReference>
<dbReference type="Pfam" id="PF00213">
    <property type="entry name" value="OSCP"/>
    <property type="match status" value="1"/>
</dbReference>
<dbReference type="PRINTS" id="PR00125">
    <property type="entry name" value="ATPASEDELTA"/>
</dbReference>
<dbReference type="SUPFAM" id="SSF47928">
    <property type="entry name" value="N-terminal domain of the delta subunit of the F1F0-ATP synthase"/>
    <property type="match status" value="1"/>
</dbReference>
<name>ATPD1_SYNC1</name>
<gene>
    <name evidence="1" type="primary">atpH1</name>
    <name type="ordered locus">Pcar_0946</name>
</gene>
<keyword id="KW-0066">ATP synthesis</keyword>
<keyword id="KW-0997">Cell inner membrane</keyword>
<keyword id="KW-1003">Cell membrane</keyword>
<keyword id="KW-0139">CF(1)</keyword>
<keyword id="KW-0375">Hydrogen ion transport</keyword>
<keyword id="KW-0406">Ion transport</keyword>
<keyword id="KW-0472">Membrane</keyword>
<keyword id="KW-1185">Reference proteome</keyword>
<keyword id="KW-0813">Transport</keyword>